<evidence type="ECO:0000255" key="1">
    <source>
        <dbReference type="HAMAP-Rule" id="MF_00443"/>
    </source>
</evidence>
<sequence>MLTIADHEFSSRLFTGTGKFARPDLMAAAVEASGSRLVTMAIKRLEPGKRHDDILTPLLALGVKLLPNTSGAKTAAEAVFAAHLAREALGTNWLKLEIHPDPKYLLPDPIETLKAAEQLVKEGFVVLPYCGADPVLCKRLEEVGCAAVMPLGAPIGSNQGLVTRDFLAIIIEQARVPVVVDAGIGAPSHAAAAFELGADAVLVNTAIAVSRDPVAMGRAFALACEAGRSAYLAGLGARGLQASASSPLTDFLEAL</sequence>
<protein>
    <recommendedName>
        <fullName evidence="1">Thiazole synthase</fullName>
        <ecNumber evidence="1">2.8.1.10</ecNumber>
    </recommendedName>
</protein>
<comment type="function">
    <text evidence="1">Catalyzes the rearrangement of 1-deoxy-D-xylulose 5-phosphate (DXP) to produce the thiazole phosphate moiety of thiamine. Sulfur is provided by the thiocarboxylate moiety of the carrier protein ThiS. In vitro, sulfur can be provided by H(2)S.</text>
</comment>
<comment type="catalytic activity">
    <reaction evidence="1">
        <text>[ThiS sulfur-carrier protein]-C-terminal-Gly-aminoethanethioate + 2-iminoacetate + 1-deoxy-D-xylulose 5-phosphate = [ThiS sulfur-carrier protein]-C-terminal Gly-Gly + 2-[(2R,5Z)-2-carboxy-4-methylthiazol-5(2H)-ylidene]ethyl phosphate + 2 H2O + H(+)</text>
        <dbReference type="Rhea" id="RHEA:26297"/>
        <dbReference type="Rhea" id="RHEA-COMP:12909"/>
        <dbReference type="Rhea" id="RHEA-COMP:19908"/>
        <dbReference type="ChEBI" id="CHEBI:15377"/>
        <dbReference type="ChEBI" id="CHEBI:15378"/>
        <dbReference type="ChEBI" id="CHEBI:57792"/>
        <dbReference type="ChEBI" id="CHEBI:62899"/>
        <dbReference type="ChEBI" id="CHEBI:77846"/>
        <dbReference type="ChEBI" id="CHEBI:90778"/>
        <dbReference type="ChEBI" id="CHEBI:232372"/>
        <dbReference type="EC" id="2.8.1.10"/>
    </reaction>
</comment>
<comment type="pathway">
    <text evidence="1">Cofactor biosynthesis; thiamine diphosphate biosynthesis.</text>
</comment>
<comment type="subunit">
    <text evidence="1">Homotetramer. Forms heterodimers with either ThiH or ThiS.</text>
</comment>
<comment type="subcellular location">
    <subcellularLocation>
        <location evidence="1">Cytoplasm</location>
    </subcellularLocation>
</comment>
<comment type="similarity">
    <text evidence="1">Belongs to the ThiG family.</text>
</comment>
<feature type="chain" id="PRO_1000025989" description="Thiazole synthase">
    <location>
        <begin position="1"/>
        <end position="255"/>
    </location>
</feature>
<feature type="active site" description="Schiff-base intermediate with DXP" evidence="1">
    <location>
        <position position="95"/>
    </location>
</feature>
<feature type="binding site" evidence="1">
    <location>
        <position position="156"/>
    </location>
    <ligand>
        <name>1-deoxy-D-xylulose 5-phosphate</name>
        <dbReference type="ChEBI" id="CHEBI:57792"/>
    </ligand>
</feature>
<feature type="binding site" evidence="1">
    <location>
        <begin position="182"/>
        <end position="183"/>
    </location>
    <ligand>
        <name>1-deoxy-D-xylulose 5-phosphate</name>
        <dbReference type="ChEBI" id="CHEBI:57792"/>
    </ligand>
</feature>
<feature type="binding site" evidence="1">
    <location>
        <begin position="204"/>
        <end position="205"/>
    </location>
    <ligand>
        <name>1-deoxy-D-xylulose 5-phosphate</name>
        <dbReference type="ChEBI" id="CHEBI:57792"/>
    </ligand>
</feature>
<reference key="1">
    <citation type="journal article" date="2008" name="BMC Genomics">
        <title>The genome of Aeromonas salmonicida subsp. salmonicida A449: insights into the evolution of a fish pathogen.</title>
        <authorList>
            <person name="Reith M.E."/>
            <person name="Singh R.K."/>
            <person name="Curtis B."/>
            <person name="Boyd J.M."/>
            <person name="Bouevitch A."/>
            <person name="Kimball J."/>
            <person name="Munholland J."/>
            <person name="Murphy C."/>
            <person name="Sarty D."/>
            <person name="Williams J."/>
            <person name="Nash J.H."/>
            <person name="Johnson S.C."/>
            <person name="Brown L.L."/>
        </authorList>
    </citation>
    <scope>NUCLEOTIDE SEQUENCE [LARGE SCALE GENOMIC DNA]</scope>
    <source>
        <strain>A449</strain>
    </source>
</reference>
<name>THIG_AERS4</name>
<gene>
    <name evidence="1" type="primary">thiG</name>
    <name type="ordered locus">ASA_3901</name>
</gene>
<proteinExistence type="inferred from homology"/>
<organism>
    <name type="scientific">Aeromonas salmonicida (strain A449)</name>
    <dbReference type="NCBI Taxonomy" id="382245"/>
    <lineage>
        <taxon>Bacteria</taxon>
        <taxon>Pseudomonadati</taxon>
        <taxon>Pseudomonadota</taxon>
        <taxon>Gammaproteobacteria</taxon>
        <taxon>Aeromonadales</taxon>
        <taxon>Aeromonadaceae</taxon>
        <taxon>Aeromonas</taxon>
    </lineage>
</organism>
<dbReference type="EC" id="2.8.1.10" evidence="1"/>
<dbReference type="EMBL" id="CP000644">
    <property type="protein sequence ID" value="ABO91854.1"/>
    <property type="molecule type" value="Genomic_DNA"/>
</dbReference>
<dbReference type="RefSeq" id="WP_005316273.1">
    <property type="nucleotide sequence ID" value="NC_009348.1"/>
</dbReference>
<dbReference type="SMR" id="A4SSI2"/>
<dbReference type="STRING" id="29491.GCA_000820065_00909"/>
<dbReference type="KEGG" id="asa:ASA_3901"/>
<dbReference type="eggNOG" id="COG2022">
    <property type="taxonomic scope" value="Bacteria"/>
</dbReference>
<dbReference type="HOGENOM" id="CLU_062233_1_0_6"/>
<dbReference type="UniPathway" id="UPA00060"/>
<dbReference type="Proteomes" id="UP000000225">
    <property type="component" value="Chromosome"/>
</dbReference>
<dbReference type="GO" id="GO:0005737">
    <property type="term" value="C:cytoplasm"/>
    <property type="evidence" value="ECO:0007669"/>
    <property type="project" value="UniProtKB-SubCell"/>
</dbReference>
<dbReference type="GO" id="GO:1990107">
    <property type="term" value="F:thiazole synthase activity"/>
    <property type="evidence" value="ECO:0007669"/>
    <property type="project" value="UniProtKB-EC"/>
</dbReference>
<dbReference type="GO" id="GO:0009229">
    <property type="term" value="P:thiamine diphosphate biosynthetic process"/>
    <property type="evidence" value="ECO:0007669"/>
    <property type="project" value="UniProtKB-UniRule"/>
</dbReference>
<dbReference type="CDD" id="cd04728">
    <property type="entry name" value="ThiG"/>
    <property type="match status" value="1"/>
</dbReference>
<dbReference type="FunFam" id="3.20.20.70:FF:000049">
    <property type="entry name" value="Thiazole synthase"/>
    <property type="match status" value="1"/>
</dbReference>
<dbReference type="Gene3D" id="3.20.20.70">
    <property type="entry name" value="Aldolase class I"/>
    <property type="match status" value="1"/>
</dbReference>
<dbReference type="HAMAP" id="MF_00443">
    <property type="entry name" value="ThiG"/>
    <property type="match status" value="1"/>
</dbReference>
<dbReference type="InterPro" id="IPR013785">
    <property type="entry name" value="Aldolase_TIM"/>
</dbReference>
<dbReference type="InterPro" id="IPR033983">
    <property type="entry name" value="Thiazole_synthase_ThiG"/>
</dbReference>
<dbReference type="InterPro" id="IPR008867">
    <property type="entry name" value="ThiG"/>
</dbReference>
<dbReference type="PANTHER" id="PTHR34266">
    <property type="entry name" value="THIAZOLE SYNTHASE"/>
    <property type="match status" value="1"/>
</dbReference>
<dbReference type="PANTHER" id="PTHR34266:SF2">
    <property type="entry name" value="THIAZOLE SYNTHASE"/>
    <property type="match status" value="1"/>
</dbReference>
<dbReference type="Pfam" id="PF05690">
    <property type="entry name" value="ThiG"/>
    <property type="match status" value="1"/>
</dbReference>
<dbReference type="SUPFAM" id="SSF110399">
    <property type="entry name" value="ThiG-like"/>
    <property type="match status" value="1"/>
</dbReference>
<accession>A4SSI2</accession>
<keyword id="KW-0963">Cytoplasm</keyword>
<keyword id="KW-0704">Schiff base</keyword>
<keyword id="KW-0784">Thiamine biosynthesis</keyword>
<keyword id="KW-0808">Transferase</keyword>